<feature type="chain" id="PRO_0000200296" description="Cytochrome b559 subunit alpha">
    <location>
        <begin position="1"/>
        <end position="83"/>
    </location>
</feature>
<feature type="transmembrane region" description="Helical" evidence="1">
    <location>
        <begin position="21"/>
        <end position="35"/>
    </location>
</feature>
<feature type="binding site" description="axial binding residue" evidence="1">
    <location>
        <position position="23"/>
    </location>
    <ligand>
        <name>heme</name>
        <dbReference type="ChEBI" id="CHEBI:30413"/>
        <note>ligand shared with beta subunit</note>
    </ligand>
    <ligandPart>
        <name>Fe</name>
        <dbReference type="ChEBI" id="CHEBI:18248"/>
    </ligandPart>
</feature>
<protein>
    <recommendedName>
        <fullName evidence="1">Cytochrome b559 subunit alpha</fullName>
    </recommendedName>
    <alternativeName>
        <fullName evidence="1">PSII reaction center subunit V</fullName>
    </alternativeName>
</protein>
<name>PSBE_AMBTC</name>
<gene>
    <name evidence="1" type="primary">psbE</name>
</gene>
<keyword id="KW-0150">Chloroplast</keyword>
<keyword id="KW-0249">Electron transport</keyword>
<keyword id="KW-0349">Heme</keyword>
<keyword id="KW-0408">Iron</keyword>
<keyword id="KW-0472">Membrane</keyword>
<keyword id="KW-0479">Metal-binding</keyword>
<keyword id="KW-0602">Photosynthesis</keyword>
<keyword id="KW-0604">Photosystem II</keyword>
<keyword id="KW-0934">Plastid</keyword>
<keyword id="KW-1185">Reference proteome</keyword>
<keyword id="KW-0793">Thylakoid</keyword>
<keyword id="KW-0812">Transmembrane</keyword>
<keyword id="KW-1133">Transmembrane helix</keyword>
<keyword id="KW-0813">Transport</keyword>
<reference key="1">
    <citation type="journal article" date="2003" name="Mol. Biol. Evol.">
        <title>Analysis of the Amborella trichopoda chloroplast genome sequence suggests that Amborella is not a basal angiosperm.</title>
        <authorList>
            <person name="Goremykin V.V."/>
            <person name="Hirsch-Ernst K.I."/>
            <person name="Wolfl S."/>
            <person name="Hellwig F.H."/>
        </authorList>
    </citation>
    <scope>NUCLEOTIDE SEQUENCE [LARGE SCALE GENOMIC DNA]</scope>
</reference>
<evidence type="ECO:0000255" key="1">
    <source>
        <dbReference type="HAMAP-Rule" id="MF_00642"/>
    </source>
</evidence>
<sequence>MSGSTGERSFADIITSIRYWVIHSITIPSLFIAGWLFVSTGLAYDVFGSPRPNEYFTESRQGIPLITGRFDSLEQLDEFSRSF</sequence>
<dbReference type="EMBL" id="AJ506156">
    <property type="protein sequence ID" value="CAD45123.1"/>
    <property type="molecule type" value="Genomic_DNA"/>
</dbReference>
<dbReference type="RefSeq" id="NP_904116.1">
    <property type="nucleotide sequence ID" value="NC_005086.1"/>
</dbReference>
<dbReference type="SMR" id="Q70XY9"/>
<dbReference type="STRING" id="13333.Q70XY9"/>
<dbReference type="GeneID" id="2546573"/>
<dbReference type="KEGG" id="atr:2546573"/>
<dbReference type="eggNOG" id="ENOG502S3QA">
    <property type="taxonomic scope" value="Eukaryota"/>
</dbReference>
<dbReference type="OrthoDB" id="1839964at2759"/>
<dbReference type="Proteomes" id="UP000017836">
    <property type="component" value="Chloroplast"/>
</dbReference>
<dbReference type="GO" id="GO:0009535">
    <property type="term" value="C:chloroplast thylakoid membrane"/>
    <property type="evidence" value="ECO:0007669"/>
    <property type="project" value="UniProtKB-SubCell"/>
</dbReference>
<dbReference type="GO" id="GO:0009539">
    <property type="term" value="C:photosystem II reaction center"/>
    <property type="evidence" value="ECO:0007669"/>
    <property type="project" value="InterPro"/>
</dbReference>
<dbReference type="GO" id="GO:0009055">
    <property type="term" value="F:electron transfer activity"/>
    <property type="evidence" value="ECO:0007669"/>
    <property type="project" value="UniProtKB-UniRule"/>
</dbReference>
<dbReference type="GO" id="GO:0020037">
    <property type="term" value="F:heme binding"/>
    <property type="evidence" value="ECO:0007669"/>
    <property type="project" value="InterPro"/>
</dbReference>
<dbReference type="GO" id="GO:0005506">
    <property type="term" value="F:iron ion binding"/>
    <property type="evidence" value="ECO:0007669"/>
    <property type="project" value="UniProtKB-UniRule"/>
</dbReference>
<dbReference type="GO" id="GO:0009767">
    <property type="term" value="P:photosynthetic electron transport chain"/>
    <property type="evidence" value="ECO:0007669"/>
    <property type="project" value="InterPro"/>
</dbReference>
<dbReference type="Gene3D" id="1.20.5.860">
    <property type="entry name" value="Photosystem II cytochrome b559, alpha subunit"/>
    <property type="match status" value="1"/>
</dbReference>
<dbReference type="HAMAP" id="MF_00642">
    <property type="entry name" value="PSII_PsbE"/>
    <property type="match status" value="1"/>
</dbReference>
<dbReference type="InterPro" id="IPR006217">
    <property type="entry name" value="PSII_cyt_b559_asu"/>
</dbReference>
<dbReference type="InterPro" id="IPR037025">
    <property type="entry name" value="PSII_cyt_b559_asu_sf"/>
</dbReference>
<dbReference type="InterPro" id="IPR006216">
    <property type="entry name" value="PSII_cyt_b559_CS"/>
</dbReference>
<dbReference type="InterPro" id="IPR013081">
    <property type="entry name" value="PSII_cyt_b559_N"/>
</dbReference>
<dbReference type="InterPro" id="IPR013082">
    <property type="entry name" value="PSII_cytb559_asu_lum"/>
</dbReference>
<dbReference type="NCBIfam" id="TIGR01332">
    <property type="entry name" value="cyt_b559_alpha"/>
    <property type="match status" value="1"/>
</dbReference>
<dbReference type="PANTHER" id="PTHR33391">
    <property type="entry name" value="CYTOCHROME B559 SUBUNIT BETA-RELATED"/>
    <property type="match status" value="1"/>
</dbReference>
<dbReference type="PANTHER" id="PTHR33391:SF9">
    <property type="entry name" value="CYTOCHROME B559 SUBUNIT BETA-RELATED"/>
    <property type="match status" value="1"/>
</dbReference>
<dbReference type="Pfam" id="PF00283">
    <property type="entry name" value="Cytochrom_B559"/>
    <property type="match status" value="1"/>
</dbReference>
<dbReference type="Pfam" id="PF00284">
    <property type="entry name" value="Cytochrom_B559a"/>
    <property type="match status" value="1"/>
</dbReference>
<dbReference type="PIRSF" id="PIRSF000036">
    <property type="entry name" value="PsbE"/>
    <property type="match status" value="1"/>
</dbReference>
<dbReference type="SUPFAM" id="SSF161045">
    <property type="entry name" value="Cytochrome b559 subunits"/>
    <property type="match status" value="1"/>
</dbReference>
<dbReference type="PROSITE" id="PS00537">
    <property type="entry name" value="CYTOCHROME_B559"/>
    <property type="match status" value="1"/>
</dbReference>
<geneLocation type="chloroplast"/>
<accession>Q70XY9</accession>
<organism>
    <name type="scientific">Amborella trichopoda</name>
    <dbReference type="NCBI Taxonomy" id="13333"/>
    <lineage>
        <taxon>Eukaryota</taxon>
        <taxon>Viridiplantae</taxon>
        <taxon>Streptophyta</taxon>
        <taxon>Embryophyta</taxon>
        <taxon>Tracheophyta</taxon>
        <taxon>Spermatophyta</taxon>
        <taxon>Magnoliopsida</taxon>
        <taxon>Amborellales</taxon>
        <taxon>Amborellaceae</taxon>
        <taxon>Amborella</taxon>
    </lineage>
</organism>
<comment type="function">
    <text evidence="1">This b-type cytochrome is tightly associated with the reaction center of photosystem II (PSII). PSII is a light-driven water:plastoquinone oxidoreductase that uses light energy to abstract electrons from H(2)O, generating O(2) and a proton gradient subsequently used for ATP formation. It consists of a core antenna complex that captures photons, and an electron transfer chain that converts photonic excitation into a charge separation.</text>
</comment>
<comment type="cofactor">
    <cofactor evidence="1">
        <name>heme b</name>
        <dbReference type="ChEBI" id="CHEBI:60344"/>
    </cofactor>
    <text evidence="1">With its partner (PsbF) binds heme. PSII binds additional chlorophylls, carotenoids and specific lipids.</text>
</comment>
<comment type="subunit">
    <text evidence="1">Heterodimer of an alpha subunit and a beta subunit. PSII is composed of 1 copy each of membrane proteins PsbA, PsbB, PsbC, PsbD, PsbE, PsbF, PsbH, PsbI, PsbJ, PsbK, PsbL, PsbM, PsbT, PsbX, PsbY, PsbZ, Psb30/Ycf12, at least 3 peripheral proteins of the oxygen-evolving complex and a large number of cofactors. It forms dimeric complexes.</text>
</comment>
<comment type="subcellular location">
    <subcellularLocation>
        <location evidence="1">Plastid</location>
        <location evidence="1">Chloroplast thylakoid membrane</location>
        <topology evidence="1">Single-pass membrane protein</topology>
    </subcellularLocation>
</comment>
<comment type="similarity">
    <text evidence="1">Belongs to the PsbE/PsbF family.</text>
</comment>
<proteinExistence type="inferred from homology"/>